<protein>
    <recommendedName>
        <fullName evidence="1">Protein RecA</fullName>
    </recommendedName>
    <alternativeName>
        <fullName evidence="1">Recombinase A</fullName>
    </alternativeName>
</protein>
<evidence type="ECO:0000255" key="1">
    <source>
        <dbReference type="HAMAP-Rule" id="MF_00268"/>
    </source>
</evidence>
<evidence type="ECO:0000256" key="2">
    <source>
        <dbReference type="SAM" id="MobiDB-lite"/>
    </source>
</evidence>
<reference key="1">
    <citation type="journal article" date="2009" name="PLoS Genet.">
        <title>The complete genome and proteome of Laribacter hongkongensis reveal potential mechanisms for adaptations to different temperatures and habitats.</title>
        <authorList>
            <person name="Woo P.C.Y."/>
            <person name="Lau S.K.P."/>
            <person name="Tse H."/>
            <person name="Teng J.L.L."/>
            <person name="Curreem S.O."/>
            <person name="Tsang A.K.L."/>
            <person name="Fan R.Y.Y."/>
            <person name="Wong G.K.M."/>
            <person name="Huang Y."/>
            <person name="Loman N.J."/>
            <person name="Snyder L.A.S."/>
            <person name="Cai J.J."/>
            <person name="Huang J.-D."/>
            <person name="Mak W."/>
            <person name="Pallen M.J."/>
            <person name="Lok S."/>
            <person name="Yuen K.-Y."/>
        </authorList>
    </citation>
    <scope>NUCLEOTIDE SEQUENCE [LARGE SCALE GENOMIC DNA]</scope>
    <source>
        <strain>HLHK9</strain>
    </source>
</reference>
<name>RECA_LARHH</name>
<keyword id="KW-0067">ATP-binding</keyword>
<keyword id="KW-0963">Cytoplasm</keyword>
<keyword id="KW-0227">DNA damage</keyword>
<keyword id="KW-0233">DNA recombination</keyword>
<keyword id="KW-0234">DNA repair</keyword>
<keyword id="KW-0238">DNA-binding</keyword>
<keyword id="KW-0547">Nucleotide-binding</keyword>
<keyword id="KW-1185">Reference proteome</keyword>
<keyword id="KW-0742">SOS response</keyword>
<sequence>MAETDKQKALSAALSQIEKQFGKGSIMRMNETQVNDNLQVISTGSLGLDMALGVGGLPRGRVVEIYGPESSGKTTLCLQVVAEAQKLGGTCAYIDAENALDPVYAGKLGVKVDDLLVSQPDTGEQALEICDMLVRSGGVDVIVVDSVAALVPKAEIEGEMGDSHVGLQARLMSQALRKLTGNIKRTNTLVIFINQIRMKIGVMFGNPETTTGGNALKFYASVRLDIRRIGAIKKTDEIIGNETRVKVVKNKVSPPFKQAEFDILYGEGISREGEIIEMGVANKFVDKSGAWYAYNGQKIGQGKDNAREWLRENPAIAQEIEKKIRTAAGVGGMNEFVPSSEEQAEASLSEDHDQ</sequence>
<comment type="function">
    <text evidence="1">Can catalyze the hydrolysis of ATP in the presence of single-stranded DNA, the ATP-dependent uptake of single-stranded DNA by duplex DNA, and the ATP-dependent hybridization of homologous single-stranded DNAs. It interacts with LexA causing its activation and leading to its autocatalytic cleavage.</text>
</comment>
<comment type="subcellular location">
    <subcellularLocation>
        <location evidence="1">Cytoplasm</location>
    </subcellularLocation>
</comment>
<comment type="similarity">
    <text evidence="1">Belongs to the RecA family.</text>
</comment>
<proteinExistence type="inferred from homology"/>
<organism>
    <name type="scientific">Laribacter hongkongensis (strain HLHK9)</name>
    <dbReference type="NCBI Taxonomy" id="557598"/>
    <lineage>
        <taxon>Bacteria</taxon>
        <taxon>Pseudomonadati</taxon>
        <taxon>Pseudomonadota</taxon>
        <taxon>Betaproteobacteria</taxon>
        <taxon>Neisseriales</taxon>
        <taxon>Aquaspirillaceae</taxon>
        <taxon>Laribacter</taxon>
    </lineage>
</organism>
<accession>C1D4J2</accession>
<dbReference type="EMBL" id="CP001154">
    <property type="protein sequence ID" value="ACO73786.1"/>
    <property type="molecule type" value="Genomic_DNA"/>
</dbReference>
<dbReference type="RefSeq" id="WP_012696278.1">
    <property type="nucleotide sequence ID" value="NC_012559.1"/>
</dbReference>
<dbReference type="SMR" id="C1D4J2"/>
<dbReference type="STRING" id="557598.LHK_00793"/>
<dbReference type="GeneID" id="75109099"/>
<dbReference type="KEGG" id="lhk:LHK_00793"/>
<dbReference type="eggNOG" id="COG0468">
    <property type="taxonomic scope" value="Bacteria"/>
</dbReference>
<dbReference type="HOGENOM" id="CLU_040469_3_2_4"/>
<dbReference type="Proteomes" id="UP000002010">
    <property type="component" value="Chromosome"/>
</dbReference>
<dbReference type="GO" id="GO:0005829">
    <property type="term" value="C:cytosol"/>
    <property type="evidence" value="ECO:0007669"/>
    <property type="project" value="TreeGrafter"/>
</dbReference>
<dbReference type="GO" id="GO:0005524">
    <property type="term" value="F:ATP binding"/>
    <property type="evidence" value="ECO:0007669"/>
    <property type="project" value="UniProtKB-UniRule"/>
</dbReference>
<dbReference type="GO" id="GO:0016887">
    <property type="term" value="F:ATP hydrolysis activity"/>
    <property type="evidence" value="ECO:0007669"/>
    <property type="project" value="InterPro"/>
</dbReference>
<dbReference type="GO" id="GO:0140664">
    <property type="term" value="F:ATP-dependent DNA damage sensor activity"/>
    <property type="evidence" value="ECO:0007669"/>
    <property type="project" value="InterPro"/>
</dbReference>
<dbReference type="GO" id="GO:0003684">
    <property type="term" value="F:damaged DNA binding"/>
    <property type="evidence" value="ECO:0007669"/>
    <property type="project" value="UniProtKB-UniRule"/>
</dbReference>
<dbReference type="GO" id="GO:0003697">
    <property type="term" value="F:single-stranded DNA binding"/>
    <property type="evidence" value="ECO:0007669"/>
    <property type="project" value="UniProtKB-UniRule"/>
</dbReference>
<dbReference type="GO" id="GO:0006310">
    <property type="term" value="P:DNA recombination"/>
    <property type="evidence" value="ECO:0007669"/>
    <property type="project" value="UniProtKB-UniRule"/>
</dbReference>
<dbReference type="GO" id="GO:0006281">
    <property type="term" value="P:DNA repair"/>
    <property type="evidence" value="ECO:0007669"/>
    <property type="project" value="UniProtKB-UniRule"/>
</dbReference>
<dbReference type="GO" id="GO:0009432">
    <property type="term" value="P:SOS response"/>
    <property type="evidence" value="ECO:0007669"/>
    <property type="project" value="UniProtKB-UniRule"/>
</dbReference>
<dbReference type="CDD" id="cd00983">
    <property type="entry name" value="RecA"/>
    <property type="match status" value="1"/>
</dbReference>
<dbReference type="FunFam" id="3.40.50.300:FF:000087">
    <property type="entry name" value="Recombinase RecA"/>
    <property type="match status" value="1"/>
</dbReference>
<dbReference type="Gene3D" id="3.40.50.300">
    <property type="entry name" value="P-loop containing nucleotide triphosphate hydrolases"/>
    <property type="match status" value="1"/>
</dbReference>
<dbReference type="HAMAP" id="MF_00268">
    <property type="entry name" value="RecA"/>
    <property type="match status" value="1"/>
</dbReference>
<dbReference type="InterPro" id="IPR003593">
    <property type="entry name" value="AAA+_ATPase"/>
</dbReference>
<dbReference type="InterPro" id="IPR013765">
    <property type="entry name" value="DNA_recomb/repair_RecA"/>
</dbReference>
<dbReference type="InterPro" id="IPR020584">
    <property type="entry name" value="DNA_recomb/repair_RecA_CS"/>
</dbReference>
<dbReference type="InterPro" id="IPR027417">
    <property type="entry name" value="P-loop_NTPase"/>
</dbReference>
<dbReference type="InterPro" id="IPR049261">
    <property type="entry name" value="RecA-like_C"/>
</dbReference>
<dbReference type="InterPro" id="IPR049428">
    <property type="entry name" value="RecA-like_N"/>
</dbReference>
<dbReference type="InterPro" id="IPR020588">
    <property type="entry name" value="RecA_ATP-bd"/>
</dbReference>
<dbReference type="InterPro" id="IPR023400">
    <property type="entry name" value="RecA_C_sf"/>
</dbReference>
<dbReference type="InterPro" id="IPR020587">
    <property type="entry name" value="RecA_monomer-monomer_interface"/>
</dbReference>
<dbReference type="NCBIfam" id="TIGR02012">
    <property type="entry name" value="tigrfam_recA"/>
    <property type="match status" value="1"/>
</dbReference>
<dbReference type="PANTHER" id="PTHR45900:SF1">
    <property type="entry name" value="MITOCHONDRIAL DNA REPAIR PROTEIN RECA HOMOLOG-RELATED"/>
    <property type="match status" value="1"/>
</dbReference>
<dbReference type="PANTHER" id="PTHR45900">
    <property type="entry name" value="RECA"/>
    <property type="match status" value="1"/>
</dbReference>
<dbReference type="Pfam" id="PF00154">
    <property type="entry name" value="RecA"/>
    <property type="match status" value="1"/>
</dbReference>
<dbReference type="Pfam" id="PF21096">
    <property type="entry name" value="RecA_C"/>
    <property type="match status" value="1"/>
</dbReference>
<dbReference type="PRINTS" id="PR00142">
    <property type="entry name" value="RECA"/>
</dbReference>
<dbReference type="SMART" id="SM00382">
    <property type="entry name" value="AAA"/>
    <property type="match status" value="1"/>
</dbReference>
<dbReference type="SUPFAM" id="SSF52540">
    <property type="entry name" value="P-loop containing nucleoside triphosphate hydrolases"/>
    <property type="match status" value="1"/>
</dbReference>
<dbReference type="SUPFAM" id="SSF54752">
    <property type="entry name" value="RecA protein, C-terminal domain"/>
    <property type="match status" value="1"/>
</dbReference>
<dbReference type="PROSITE" id="PS00321">
    <property type="entry name" value="RECA_1"/>
    <property type="match status" value="1"/>
</dbReference>
<dbReference type="PROSITE" id="PS50162">
    <property type="entry name" value="RECA_2"/>
    <property type="match status" value="1"/>
</dbReference>
<dbReference type="PROSITE" id="PS50163">
    <property type="entry name" value="RECA_3"/>
    <property type="match status" value="1"/>
</dbReference>
<gene>
    <name evidence="1" type="primary">recA</name>
    <name type="ordered locus">LHK_00793</name>
</gene>
<feature type="chain" id="PRO_1000193315" description="Protein RecA">
    <location>
        <begin position="1"/>
        <end position="354"/>
    </location>
</feature>
<feature type="region of interest" description="Disordered" evidence="2">
    <location>
        <begin position="333"/>
        <end position="354"/>
    </location>
</feature>
<feature type="binding site" evidence="1">
    <location>
        <begin position="67"/>
        <end position="74"/>
    </location>
    <ligand>
        <name>ATP</name>
        <dbReference type="ChEBI" id="CHEBI:30616"/>
    </ligand>
</feature>